<dbReference type="EMBL" id="BC133202">
    <property type="protein sequence ID" value="AAI33203.1"/>
    <property type="molecule type" value="mRNA"/>
</dbReference>
<dbReference type="RefSeq" id="NP_001091313.1">
    <property type="nucleotide sequence ID" value="NM_001097844.1"/>
</dbReference>
<dbReference type="BioGRID" id="674417">
    <property type="interactions" value="1"/>
</dbReference>
<dbReference type="IntAct" id="A2RV70">
    <property type="interactions" value="1"/>
</dbReference>
<dbReference type="DNASU" id="100037139"/>
<dbReference type="GeneID" id="100037139"/>
<dbReference type="KEGG" id="xla:100037139"/>
<dbReference type="AGR" id="Xenbase:XB-GENE-865034"/>
<dbReference type="CTD" id="100037139"/>
<dbReference type="Xenbase" id="XB-GENE-865034">
    <property type="gene designation" value="znf326.S"/>
</dbReference>
<dbReference type="OMA" id="XMAFTCS"/>
<dbReference type="OrthoDB" id="9904304at2759"/>
<dbReference type="Proteomes" id="UP000186698">
    <property type="component" value="Chromosome 4S"/>
</dbReference>
<dbReference type="Bgee" id="100037139">
    <property type="expression patterns" value="Expressed in gastrula and 19 other cell types or tissues"/>
</dbReference>
<dbReference type="GO" id="GO:0044609">
    <property type="term" value="C:DBIRD complex"/>
    <property type="evidence" value="ECO:0000250"/>
    <property type="project" value="UniProtKB"/>
</dbReference>
<dbReference type="GO" id="GO:0005634">
    <property type="term" value="C:nucleus"/>
    <property type="evidence" value="ECO:0000318"/>
    <property type="project" value="GO_Central"/>
</dbReference>
<dbReference type="GO" id="GO:0003677">
    <property type="term" value="F:DNA binding"/>
    <property type="evidence" value="ECO:0007669"/>
    <property type="project" value="UniProtKB-KW"/>
</dbReference>
<dbReference type="GO" id="GO:0000993">
    <property type="term" value="F:RNA polymerase II complex binding"/>
    <property type="evidence" value="ECO:0000250"/>
    <property type="project" value="UniProtKB"/>
</dbReference>
<dbReference type="GO" id="GO:0008270">
    <property type="term" value="F:zinc ion binding"/>
    <property type="evidence" value="ECO:0007669"/>
    <property type="project" value="UniProtKB-KW"/>
</dbReference>
<dbReference type="GO" id="GO:0006397">
    <property type="term" value="P:mRNA processing"/>
    <property type="evidence" value="ECO:0007669"/>
    <property type="project" value="UniProtKB-KW"/>
</dbReference>
<dbReference type="GO" id="GO:0032784">
    <property type="term" value="P:regulation of DNA-templated transcription elongation"/>
    <property type="evidence" value="ECO:0000250"/>
    <property type="project" value="UniProtKB"/>
</dbReference>
<dbReference type="GO" id="GO:0043484">
    <property type="term" value="P:regulation of RNA splicing"/>
    <property type="evidence" value="ECO:0000250"/>
    <property type="project" value="UniProtKB"/>
</dbReference>
<dbReference type="GO" id="GO:0008380">
    <property type="term" value="P:RNA splicing"/>
    <property type="evidence" value="ECO:0007669"/>
    <property type="project" value="UniProtKB-KW"/>
</dbReference>
<dbReference type="InterPro" id="IPR007071">
    <property type="entry name" value="AKAP95"/>
</dbReference>
<dbReference type="InterPro" id="IPR034736">
    <property type="entry name" value="ZF_C2H2_AKAP95"/>
</dbReference>
<dbReference type="PANTHER" id="PTHR12190">
    <property type="entry name" value="A-KINASE ANCHOR PROTEIN AKAP 8"/>
    <property type="match status" value="1"/>
</dbReference>
<dbReference type="PANTHER" id="PTHR12190:SF1">
    <property type="entry name" value="DBIRD COMPLEX SUBUNIT ZNF326"/>
    <property type="match status" value="1"/>
</dbReference>
<dbReference type="Pfam" id="PF04988">
    <property type="entry name" value="AKAP95"/>
    <property type="match status" value="1"/>
</dbReference>
<dbReference type="PROSITE" id="PS51799">
    <property type="entry name" value="ZF_C2H2_AKAP95"/>
    <property type="match status" value="2"/>
</dbReference>
<comment type="function">
    <text evidence="1">Core component of the DBIRD complex, a multiprotein complex that acts at the interface between core mRNP particles and RNA polymerase II (RNAPII) and integrates transcript elongation with the regulation of alternative splicing.</text>
</comment>
<comment type="subunit">
    <text evidence="1">Component of the DBIRD complex.</text>
</comment>
<comment type="subcellular location">
    <subcellularLocation>
        <location evidence="1">Nucleus</location>
    </subcellularLocation>
</comment>
<comment type="similarity">
    <text evidence="2">Belongs to the AKAP95 family.</text>
</comment>
<protein>
    <recommendedName>
        <fullName>DBIRD complex subunit ZNF326</fullName>
    </recommendedName>
    <alternativeName>
        <fullName>Zinc finger protein 326</fullName>
    </alternativeName>
    <alternativeName>
        <fullName>Zinc finger protein interacting with mRNPs</fullName>
    </alternativeName>
</protein>
<proteinExistence type="evidence at transcript level"/>
<reference key="1">
    <citation type="submission" date="2007-02" db="EMBL/GenBank/DDBJ databases">
        <authorList>
            <consortium name="NIH - Xenopus Gene Collection (XGC) project"/>
        </authorList>
    </citation>
    <scope>NUCLEOTIDE SEQUENCE [LARGE SCALE MRNA]</scope>
    <source>
        <tissue>Embryo</tissue>
    </source>
</reference>
<keyword id="KW-0238">DNA-binding</keyword>
<keyword id="KW-0479">Metal-binding</keyword>
<keyword id="KW-0507">mRNA processing</keyword>
<keyword id="KW-0508">mRNA splicing</keyword>
<keyword id="KW-0539">Nucleus</keyword>
<keyword id="KW-1185">Reference proteome</keyword>
<keyword id="KW-0677">Repeat</keyword>
<keyword id="KW-0862">Zinc</keyword>
<keyword id="KW-0863">Zinc-finger</keyword>
<sequence length="494" mass="55935">MDREYGSYNQRSVNSYGNQSFSMDEMGDSNFSRFGPYESYDSRSSVGGRDLYRSGYGYNDHEQGHFGDSYDGRYENPYRNSVDSFEGRSQGGSSWDPSFTRSKVRTGFMEDRGRDSYSSYGSFSSPYMKPAAVGSRGRGMPAYPENAFGGRSNDAFGGPSKGRGRGRGQMPEYGVMRRHRVVVEYKHLGVAARGAARGVKRKMAPPFKPVGFFGKKQKLSKPGANQNKSVPPPAEKLSEEEEEKRRTEARREKQRRRREKNSEKYGDGTAFTCSFCKFRSFDEKGIEEHLTSATHQEMLDHIQKQTKFDKPVMEFLHECIVNKFKKTVARRVQSVANEAAKTLEKDVMEGVNPDDHMMKVETVHCSACSVYVPALHSSVQLHLKSADHSKSKLTYKEQIKRESILTATSILNNPLVKARYELYLKGENPFETQPDEQQQEQEEEEEEEEQQEQVAVSEQEPSEQETSDEQAAAIAAEPEGEDFTCDPLTTTDEV</sequence>
<name>ZN326_XENLA</name>
<gene>
    <name type="primary">znf326</name>
    <name type="synonym">zird</name>
</gene>
<feature type="chain" id="PRO_0000417536" description="DBIRD complex subunit ZNF326">
    <location>
        <begin position="1"/>
        <end position="494"/>
    </location>
</feature>
<feature type="zinc finger region" description="C2H2 AKAP95-type 1" evidence="2">
    <location>
        <begin position="273"/>
        <end position="295"/>
    </location>
</feature>
<feature type="zinc finger region" description="C2H2 AKAP95-type 2" evidence="2">
    <location>
        <begin position="365"/>
        <end position="388"/>
    </location>
</feature>
<feature type="region of interest" description="Disordered" evidence="3">
    <location>
        <begin position="1"/>
        <end position="22"/>
    </location>
</feature>
<feature type="region of interest" description="Disordered" evidence="3">
    <location>
        <begin position="147"/>
        <end position="170"/>
    </location>
</feature>
<feature type="region of interest" description="Disordered" evidence="3">
    <location>
        <begin position="202"/>
        <end position="264"/>
    </location>
</feature>
<feature type="region of interest" description="Disordered" evidence="3">
    <location>
        <begin position="429"/>
        <end position="494"/>
    </location>
</feature>
<feature type="short sequence motif" description="Bipartite nuclear localization signal" evidence="1">
    <location>
        <begin position="200"/>
        <end position="221"/>
    </location>
</feature>
<feature type="compositionally biased region" description="Polar residues" evidence="3">
    <location>
        <begin position="7"/>
        <end position="22"/>
    </location>
</feature>
<feature type="compositionally biased region" description="Acidic residues" evidence="3">
    <location>
        <begin position="433"/>
        <end position="451"/>
    </location>
</feature>
<accession>A2RV70</accession>
<organism>
    <name type="scientific">Xenopus laevis</name>
    <name type="common">African clawed frog</name>
    <dbReference type="NCBI Taxonomy" id="8355"/>
    <lineage>
        <taxon>Eukaryota</taxon>
        <taxon>Metazoa</taxon>
        <taxon>Chordata</taxon>
        <taxon>Craniata</taxon>
        <taxon>Vertebrata</taxon>
        <taxon>Euteleostomi</taxon>
        <taxon>Amphibia</taxon>
        <taxon>Batrachia</taxon>
        <taxon>Anura</taxon>
        <taxon>Pipoidea</taxon>
        <taxon>Pipidae</taxon>
        <taxon>Xenopodinae</taxon>
        <taxon>Xenopus</taxon>
        <taxon>Xenopus</taxon>
    </lineage>
</organism>
<evidence type="ECO:0000250" key="1"/>
<evidence type="ECO:0000255" key="2">
    <source>
        <dbReference type="PROSITE-ProRule" id="PRU01140"/>
    </source>
</evidence>
<evidence type="ECO:0000256" key="3">
    <source>
        <dbReference type="SAM" id="MobiDB-lite"/>
    </source>
</evidence>